<keyword id="KW-0007">Acetylation</keyword>
<keyword id="KW-0963">Cytoplasm</keyword>
<keyword id="KW-0597">Phosphoprotein</keyword>
<keyword id="KW-1185">Reference proteome</keyword>
<keyword id="KW-0808">Transferase</keyword>
<dbReference type="EC" id="2.5.1.57" evidence="3"/>
<dbReference type="EMBL" id="AB041263">
    <property type="protein sequence ID" value="BAA98131.1"/>
    <property type="molecule type" value="mRNA"/>
</dbReference>
<dbReference type="EMBL" id="AK076290">
    <property type="protein sequence ID" value="BAC36290.1"/>
    <property type="molecule type" value="mRNA"/>
</dbReference>
<dbReference type="EMBL" id="AK156254">
    <property type="protein sequence ID" value="BAE33642.1"/>
    <property type="molecule type" value="mRNA"/>
</dbReference>
<dbReference type="EMBL" id="AL683884">
    <property type="status" value="NOT_ANNOTATED_CDS"/>
    <property type="molecule type" value="Genomic_DNA"/>
</dbReference>
<dbReference type="EMBL" id="CH466565">
    <property type="protein sequence ID" value="EDL02367.1"/>
    <property type="molecule type" value="Genomic_DNA"/>
</dbReference>
<dbReference type="EMBL" id="BC003307">
    <property type="protein sequence ID" value="AAH03307.1"/>
    <property type="molecule type" value="mRNA"/>
</dbReference>
<dbReference type="EMBL" id="BC057977">
    <property type="protein sequence ID" value="AAH57977.1"/>
    <property type="molecule type" value="mRNA"/>
</dbReference>
<dbReference type="CCDS" id="CCDS18152.1"/>
<dbReference type="PIR" id="JC7321">
    <property type="entry name" value="JC7321"/>
</dbReference>
<dbReference type="RefSeq" id="NP_444409.1">
    <property type="nucleotide sequence ID" value="NM_053179.4"/>
</dbReference>
<dbReference type="SMR" id="Q99J77"/>
<dbReference type="FunCoup" id="Q99J77">
    <property type="interactions" value="1536"/>
</dbReference>
<dbReference type="IntAct" id="Q99J77">
    <property type="interactions" value="1"/>
</dbReference>
<dbReference type="STRING" id="10090.ENSMUSP00000030018"/>
<dbReference type="GlyGen" id="Q99J77">
    <property type="glycosylation" value="1 site, 1 O-linked glycan (1 site)"/>
</dbReference>
<dbReference type="iPTMnet" id="Q99J77"/>
<dbReference type="PhosphoSitePlus" id="Q99J77"/>
<dbReference type="SwissPalm" id="Q99J77"/>
<dbReference type="jPOST" id="Q99J77"/>
<dbReference type="PaxDb" id="10090-ENSMUSP00000030018"/>
<dbReference type="PeptideAtlas" id="Q99J77"/>
<dbReference type="ProteomicsDB" id="261038"/>
<dbReference type="Pumba" id="Q99J77"/>
<dbReference type="Antibodypedia" id="14440">
    <property type="antibodies" value="218 antibodies from 26 providers"/>
</dbReference>
<dbReference type="DNASU" id="94181"/>
<dbReference type="Ensembl" id="ENSMUST00000030018.5">
    <property type="protein sequence ID" value="ENSMUSP00000030018.5"/>
    <property type="gene ID" value="ENSMUSG00000028334.11"/>
</dbReference>
<dbReference type="GeneID" id="94181"/>
<dbReference type="KEGG" id="mmu:94181"/>
<dbReference type="UCSC" id="uc008stv.1">
    <property type="organism name" value="mouse"/>
</dbReference>
<dbReference type="AGR" id="MGI:2149820"/>
<dbReference type="CTD" id="54187"/>
<dbReference type="MGI" id="MGI:2149820">
    <property type="gene designation" value="Nans"/>
</dbReference>
<dbReference type="VEuPathDB" id="HostDB:ENSMUSG00000028334"/>
<dbReference type="eggNOG" id="ENOG502QR5J">
    <property type="taxonomic scope" value="Eukaryota"/>
</dbReference>
<dbReference type="GeneTree" id="ENSGT00390000011081"/>
<dbReference type="HOGENOM" id="CLU_040465_1_0_1"/>
<dbReference type="InParanoid" id="Q99J77"/>
<dbReference type="OMA" id="MTYIDYR"/>
<dbReference type="OrthoDB" id="9928645at2759"/>
<dbReference type="PhylomeDB" id="Q99J77"/>
<dbReference type="TreeFam" id="TF324826"/>
<dbReference type="BioCyc" id="MetaCyc:MONOMER-14514"/>
<dbReference type="BRENDA" id="2.5.1.57">
    <property type="organism ID" value="3474"/>
</dbReference>
<dbReference type="Reactome" id="R-MMU-4085001">
    <property type="pathway name" value="Sialic acid metabolism"/>
</dbReference>
<dbReference type="BioGRID-ORCS" id="94181">
    <property type="hits" value="11 hits in 81 CRISPR screens"/>
</dbReference>
<dbReference type="ChiTaRS" id="Nans">
    <property type="organism name" value="mouse"/>
</dbReference>
<dbReference type="PRO" id="PR:Q99J77"/>
<dbReference type="Proteomes" id="UP000000589">
    <property type="component" value="Chromosome 4"/>
</dbReference>
<dbReference type="RNAct" id="Q99J77">
    <property type="molecule type" value="protein"/>
</dbReference>
<dbReference type="Bgee" id="ENSMUSG00000028334">
    <property type="expression patterns" value="Expressed in left colon and 285 other cell types or tissues"/>
</dbReference>
<dbReference type="GO" id="GO:0005829">
    <property type="term" value="C:cytosol"/>
    <property type="evidence" value="ECO:0000314"/>
    <property type="project" value="MGI"/>
</dbReference>
<dbReference type="GO" id="GO:0047444">
    <property type="term" value="F:N-acylneuraminate-9-phosphate synthase activity"/>
    <property type="evidence" value="ECO:0000314"/>
    <property type="project" value="MGI"/>
</dbReference>
<dbReference type="GO" id="GO:0016051">
    <property type="term" value="P:carbohydrate biosynthetic process"/>
    <property type="evidence" value="ECO:0007669"/>
    <property type="project" value="InterPro"/>
</dbReference>
<dbReference type="GO" id="GO:0006055">
    <property type="term" value="P:CMP-N-acetylneuraminate biosynthetic process"/>
    <property type="evidence" value="ECO:0000315"/>
    <property type="project" value="MGI"/>
</dbReference>
<dbReference type="GO" id="GO:0070085">
    <property type="term" value="P:glycosylation"/>
    <property type="evidence" value="ECO:0007669"/>
    <property type="project" value="Ensembl"/>
</dbReference>
<dbReference type="GO" id="GO:0046380">
    <property type="term" value="P:N-acetylneuraminate biosynthetic process"/>
    <property type="evidence" value="ECO:0000266"/>
    <property type="project" value="MGI"/>
</dbReference>
<dbReference type="GO" id="GO:0006054">
    <property type="term" value="P:N-acetylneuraminate metabolic process"/>
    <property type="evidence" value="ECO:0000315"/>
    <property type="project" value="MGI"/>
</dbReference>
<dbReference type="CDD" id="cd11615">
    <property type="entry name" value="SAF_NeuB_like"/>
    <property type="match status" value="1"/>
</dbReference>
<dbReference type="FunFam" id="3.90.1210.10:FF:000002">
    <property type="entry name" value="Sialic acid synthase"/>
    <property type="match status" value="1"/>
</dbReference>
<dbReference type="FunFam" id="3.20.20.70:FF:000144">
    <property type="entry name" value="sialic acid synthase"/>
    <property type="match status" value="1"/>
</dbReference>
<dbReference type="Gene3D" id="3.20.20.70">
    <property type="entry name" value="Aldolase class I"/>
    <property type="match status" value="1"/>
</dbReference>
<dbReference type="Gene3D" id="3.90.1210.10">
    <property type="entry name" value="Antifreeze-like/N-acetylneuraminic acid synthase C-terminal domain"/>
    <property type="match status" value="1"/>
</dbReference>
<dbReference type="InterPro" id="IPR006190">
    <property type="entry name" value="AFP_Neu5c_C"/>
</dbReference>
<dbReference type="InterPro" id="IPR036732">
    <property type="entry name" value="AFP_Neu5c_C_sf"/>
</dbReference>
<dbReference type="InterPro" id="IPR013785">
    <property type="entry name" value="Aldolase_TIM"/>
</dbReference>
<dbReference type="InterPro" id="IPR006013">
    <property type="entry name" value="Antifreeze_III"/>
</dbReference>
<dbReference type="InterPro" id="IPR013132">
    <property type="entry name" value="Neu5Ac_N"/>
</dbReference>
<dbReference type="InterPro" id="IPR051690">
    <property type="entry name" value="Nonulosonic_Acid_Synth"/>
</dbReference>
<dbReference type="InterPro" id="IPR013974">
    <property type="entry name" value="SAF"/>
</dbReference>
<dbReference type="PANTHER" id="PTHR42966">
    <property type="entry name" value="N-ACETYLNEURAMINATE SYNTHASE"/>
    <property type="match status" value="1"/>
</dbReference>
<dbReference type="PANTHER" id="PTHR42966:SF1">
    <property type="entry name" value="SIALIC ACID SYNTHASE"/>
    <property type="match status" value="1"/>
</dbReference>
<dbReference type="Pfam" id="PF03102">
    <property type="entry name" value="NeuB"/>
    <property type="match status" value="1"/>
</dbReference>
<dbReference type="Pfam" id="PF08666">
    <property type="entry name" value="SAF"/>
    <property type="match status" value="1"/>
</dbReference>
<dbReference type="PRINTS" id="PR00357">
    <property type="entry name" value="ANTIFREEZIII"/>
</dbReference>
<dbReference type="SMART" id="SM00858">
    <property type="entry name" value="SAF"/>
    <property type="match status" value="1"/>
</dbReference>
<dbReference type="SUPFAM" id="SSF51269">
    <property type="entry name" value="AFP III-like domain"/>
    <property type="match status" value="1"/>
</dbReference>
<dbReference type="SUPFAM" id="SSF51569">
    <property type="entry name" value="Aldolase"/>
    <property type="match status" value="1"/>
</dbReference>
<dbReference type="PROSITE" id="PS50844">
    <property type="entry name" value="AFP_LIKE"/>
    <property type="match status" value="1"/>
</dbReference>
<accession>Q99J77</accession>
<accession>Q9JJH0</accession>
<organism evidence="14">
    <name type="scientific">Mus musculus</name>
    <name type="common">Mouse</name>
    <dbReference type="NCBI Taxonomy" id="10090"/>
    <lineage>
        <taxon>Eukaryota</taxon>
        <taxon>Metazoa</taxon>
        <taxon>Chordata</taxon>
        <taxon>Craniata</taxon>
        <taxon>Vertebrata</taxon>
        <taxon>Euteleostomi</taxon>
        <taxon>Mammalia</taxon>
        <taxon>Eutheria</taxon>
        <taxon>Euarchontoglires</taxon>
        <taxon>Glires</taxon>
        <taxon>Rodentia</taxon>
        <taxon>Myomorpha</taxon>
        <taxon>Muroidea</taxon>
        <taxon>Muridae</taxon>
        <taxon>Murinae</taxon>
        <taxon>Mus</taxon>
        <taxon>Mus</taxon>
    </lineage>
</organism>
<comment type="function">
    <text evidence="3">Catalyzes condensation of phosphoenolpyruvate (PEP) and N-acetylmannosamine 6-phosphate (ManNAc-6-P) to synthesize N-acetylneuraminate-9-phosphate (Neu5Ac-9-P) (PubMed:10873658). Neu5Ac-9-P is the phosphorylated forms of sialic acid N-acetylneuraminic acid (Neu5Ac) (PubMed:10873658). In contrast with human ortholog, has no detectable activity towards D-mannose 6-phosphate (PubMed:10873658).</text>
</comment>
<comment type="catalytic activity">
    <reaction evidence="3">
        <text>aldehydo-N-acetyl-D-mannosamine 6-phosphate + phosphoenolpyruvate + H2O = N-acetylneuraminate 9-phosphate + phosphate</text>
        <dbReference type="Rhea" id="RHEA:80835"/>
        <dbReference type="ChEBI" id="CHEBI:15377"/>
        <dbReference type="ChEBI" id="CHEBI:43474"/>
        <dbReference type="ChEBI" id="CHEBI:58557"/>
        <dbReference type="ChEBI" id="CHEBI:58702"/>
        <dbReference type="ChEBI" id="CHEBI:231734"/>
        <dbReference type="EC" id="2.5.1.57"/>
    </reaction>
    <physiologicalReaction direction="left-to-right" evidence="6">
        <dbReference type="Rhea" id="RHEA:80836"/>
    </physiologicalReaction>
</comment>
<comment type="subcellular location">
    <subcellularLocation>
        <location evidence="3">Cytoplasm</location>
    </subcellularLocation>
</comment>
<comment type="tissue specificity">
    <text evidence="3">Ubiquitous.</text>
</comment>
<comment type="caution">
    <text evidence="3">Does not exhibit sialic acid synthase activity, which catalyzes the synthesis of Neu5Ac and deaminoneuraminic acid (KDN) from N-acetylmannosamine (ManNAc) and mannose, respectively.</text>
</comment>
<protein>
    <recommendedName>
        <fullName evidence="4">N-acetylneuraminate-9-phosphate synthase</fullName>
        <ecNumber evidence="3">2.5.1.57</ecNumber>
    </recommendedName>
    <alternativeName>
        <fullName evidence="4">N-acetylneuraminic acid phosphate synthase</fullName>
    </alternativeName>
    <alternativeName>
        <fullName evidence="1">Sialic acid synthase</fullName>
    </alternativeName>
</protein>
<gene>
    <name evidence="13" type="primary">Nans</name>
    <name evidence="13" type="synonym">Sas</name>
</gene>
<reference evidence="9" key="1">
    <citation type="journal article" date="2000" name="Biochem. Biophys. Res. Commun.">
        <title>Molecular cloning and expression of the mouse N-acetylneuraminic acid 9-phosphate synthase which does not have deaminoneuraminic acid (KDN) 9-phosphate synthase activity.</title>
        <authorList>
            <person name="Nakata D."/>
            <person name="Close B.E."/>
            <person name="Colley K.J."/>
            <person name="Matsuda T."/>
            <person name="Kitajima K."/>
        </authorList>
    </citation>
    <scope>NUCLEOTIDE SEQUENCE [MRNA]</scope>
    <scope>FUNCTION</scope>
    <scope>CATALYTIC ACTIVITY</scope>
    <scope>SUBCELLULAR LOCATION</scope>
    <scope>TISSUE SPECIFICITY</scope>
</reference>
<reference evidence="10" key="2">
    <citation type="journal article" date="2005" name="Science">
        <title>The transcriptional landscape of the mammalian genome.</title>
        <authorList>
            <person name="Carninci P."/>
            <person name="Kasukawa T."/>
            <person name="Katayama S."/>
            <person name="Gough J."/>
            <person name="Frith M.C."/>
            <person name="Maeda N."/>
            <person name="Oyama R."/>
            <person name="Ravasi T."/>
            <person name="Lenhard B."/>
            <person name="Wells C."/>
            <person name="Kodzius R."/>
            <person name="Shimokawa K."/>
            <person name="Bajic V.B."/>
            <person name="Brenner S.E."/>
            <person name="Batalov S."/>
            <person name="Forrest A.R."/>
            <person name="Zavolan M."/>
            <person name="Davis M.J."/>
            <person name="Wilming L.G."/>
            <person name="Aidinis V."/>
            <person name="Allen J.E."/>
            <person name="Ambesi-Impiombato A."/>
            <person name="Apweiler R."/>
            <person name="Aturaliya R.N."/>
            <person name="Bailey T.L."/>
            <person name="Bansal M."/>
            <person name="Baxter L."/>
            <person name="Beisel K.W."/>
            <person name="Bersano T."/>
            <person name="Bono H."/>
            <person name="Chalk A.M."/>
            <person name="Chiu K.P."/>
            <person name="Choudhary V."/>
            <person name="Christoffels A."/>
            <person name="Clutterbuck D.R."/>
            <person name="Crowe M.L."/>
            <person name="Dalla E."/>
            <person name="Dalrymple B.P."/>
            <person name="de Bono B."/>
            <person name="Della Gatta G."/>
            <person name="di Bernardo D."/>
            <person name="Down T."/>
            <person name="Engstrom P."/>
            <person name="Fagiolini M."/>
            <person name="Faulkner G."/>
            <person name="Fletcher C.F."/>
            <person name="Fukushima T."/>
            <person name="Furuno M."/>
            <person name="Futaki S."/>
            <person name="Gariboldi M."/>
            <person name="Georgii-Hemming P."/>
            <person name="Gingeras T.R."/>
            <person name="Gojobori T."/>
            <person name="Green R.E."/>
            <person name="Gustincich S."/>
            <person name="Harbers M."/>
            <person name="Hayashi Y."/>
            <person name="Hensch T.K."/>
            <person name="Hirokawa N."/>
            <person name="Hill D."/>
            <person name="Huminiecki L."/>
            <person name="Iacono M."/>
            <person name="Ikeo K."/>
            <person name="Iwama A."/>
            <person name="Ishikawa T."/>
            <person name="Jakt M."/>
            <person name="Kanapin A."/>
            <person name="Katoh M."/>
            <person name="Kawasawa Y."/>
            <person name="Kelso J."/>
            <person name="Kitamura H."/>
            <person name="Kitano H."/>
            <person name="Kollias G."/>
            <person name="Krishnan S.P."/>
            <person name="Kruger A."/>
            <person name="Kummerfeld S.K."/>
            <person name="Kurochkin I.V."/>
            <person name="Lareau L.F."/>
            <person name="Lazarevic D."/>
            <person name="Lipovich L."/>
            <person name="Liu J."/>
            <person name="Liuni S."/>
            <person name="McWilliam S."/>
            <person name="Madan Babu M."/>
            <person name="Madera M."/>
            <person name="Marchionni L."/>
            <person name="Matsuda H."/>
            <person name="Matsuzawa S."/>
            <person name="Miki H."/>
            <person name="Mignone F."/>
            <person name="Miyake S."/>
            <person name="Morris K."/>
            <person name="Mottagui-Tabar S."/>
            <person name="Mulder N."/>
            <person name="Nakano N."/>
            <person name="Nakauchi H."/>
            <person name="Ng P."/>
            <person name="Nilsson R."/>
            <person name="Nishiguchi S."/>
            <person name="Nishikawa S."/>
            <person name="Nori F."/>
            <person name="Ohara O."/>
            <person name="Okazaki Y."/>
            <person name="Orlando V."/>
            <person name="Pang K.C."/>
            <person name="Pavan W.J."/>
            <person name="Pavesi G."/>
            <person name="Pesole G."/>
            <person name="Petrovsky N."/>
            <person name="Piazza S."/>
            <person name="Reed J."/>
            <person name="Reid J.F."/>
            <person name="Ring B.Z."/>
            <person name="Ringwald M."/>
            <person name="Rost B."/>
            <person name="Ruan Y."/>
            <person name="Salzberg S.L."/>
            <person name="Sandelin A."/>
            <person name="Schneider C."/>
            <person name="Schoenbach C."/>
            <person name="Sekiguchi K."/>
            <person name="Semple C.A."/>
            <person name="Seno S."/>
            <person name="Sessa L."/>
            <person name="Sheng Y."/>
            <person name="Shibata Y."/>
            <person name="Shimada H."/>
            <person name="Shimada K."/>
            <person name="Silva D."/>
            <person name="Sinclair B."/>
            <person name="Sperling S."/>
            <person name="Stupka E."/>
            <person name="Sugiura K."/>
            <person name="Sultana R."/>
            <person name="Takenaka Y."/>
            <person name="Taki K."/>
            <person name="Tammoja K."/>
            <person name="Tan S.L."/>
            <person name="Tang S."/>
            <person name="Taylor M.S."/>
            <person name="Tegner J."/>
            <person name="Teichmann S.A."/>
            <person name="Ueda H.R."/>
            <person name="van Nimwegen E."/>
            <person name="Verardo R."/>
            <person name="Wei C.L."/>
            <person name="Yagi K."/>
            <person name="Yamanishi H."/>
            <person name="Zabarovsky E."/>
            <person name="Zhu S."/>
            <person name="Zimmer A."/>
            <person name="Hide W."/>
            <person name="Bult C."/>
            <person name="Grimmond S.M."/>
            <person name="Teasdale R.D."/>
            <person name="Liu E.T."/>
            <person name="Brusic V."/>
            <person name="Quackenbush J."/>
            <person name="Wahlestedt C."/>
            <person name="Mattick J.S."/>
            <person name="Hume D.A."/>
            <person name="Kai C."/>
            <person name="Sasaki D."/>
            <person name="Tomaru Y."/>
            <person name="Fukuda S."/>
            <person name="Kanamori-Katayama M."/>
            <person name="Suzuki M."/>
            <person name="Aoki J."/>
            <person name="Arakawa T."/>
            <person name="Iida J."/>
            <person name="Imamura K."/>
            <person name="Itoh M."/>
            <person name="Kato T."/>
            <person name="Kawaji H."/>
            <person name="Kawagashira N."/>
            <person name="Kawashima T."/>
            <person name="Kojima M."/>
            <person name="Kondo S."/>
            <person name="Konno H."/>
            <person name="Nakano K."/>
            <person name="Ninomiya N."/>
            <person name="Nishio T."/>
            <person name="Okada M."/>
            <person name="Plessy C."/>
            <person name="Shibata K."/>
            <person name="Shiraki T."/>
            <person name="Suzuki S."/>
            <person name="Tagami M."/>
            <person name="Waki K."/>
            <person name="Watahiki A."/>
            <person name="Okamura-Oho Y."/>
            <person name="Suzuki H."/>
            <person name="Kawai J."/>
            <person name="Hayashizaki Y."/>
        </authorList>
    </citation>
    <scope>NUCLEOTIDE SEQUENCE [LARGE SCALE MRNA]</scope>
    <source>
        <strain evidence="10">C57BL/6J</strain>
        <strain evidence="11">NOD</strain>
        <tissue evidence="10">Skin</tissue>
        <tissue evidence="11">Spleen</tissue>
    </source>
</reference>
<reference evidence="14" key="3">
    <citation type="journal article" date="2009" name="PLoS Biol.">
        <title>Lineage-specific biology revealed by a finished genome assembly of the mouse.</title>
        <authorList>
            <person name="Church D.M."/>
            <person name="Goodstadt L."/>
            <person name="Hillier L.W."/>
            <person name="Zody M.C."/>
            <person name="Goldstein S."/>
            <person name="She X."/>
            <person name="Bult C.J."/>
            <person name="Agarwala R."/>
            <person name="Cherry J.L."/>
            <person name="DiCuccio M."/>
            <person name="Hlavina W."/>
            <person name="Kapustin Y."/>
            <person name="Meric P."/>
            <person name="Maglott D."/>
            <person name="Birtle Z."/>
            <person name="Marques A.C."/>
            <person name="Graves T."/>
            <person name="Zhou S."/>
            <person name="Teague B."/>
            <person name="Potamousis K."/>
            <person name="Churas C."/>
            <person name="Place M."/>
            <person name="Herschleb J."/>
            <person name="Runnheim R."/>
            <person name="Forrest D."/>
            <person name="Amos-Landgraf J."/>
            <person name="Schwartz D.C."/>
            <person name="Cheng Z."/>
            <person name="Lindblad-Toh K."/>
            <person name="Eichler E.E."/>
            <person name="Ponting C.P."/>
        </authorList>
    </citation>
    <scope>NUCLEOTIDE SEQUENCE [LARGE SCALE GENOMIC DNA]</scope>
    <source>
        <strain>C57BL/6J</strain>
    </source>
</reference>
<reference evidence="12" key="4">
    <citation type="submission" date="2005-09" db="EMBL/GenBank/DDBJ databases">
        <authorList>
            <person name="Mural R.J."/>
            <person name="Adams M.D."/>
            <person name="Myers E.W."/>
            <person name="Smith H.O."/>
            <person name="Venter J.C."/>
        </authorList>
    </citation>
    <scope>NUCLEOTIDE SEQUENCE [LARGE SCALE GENOMIC DNA]</scope>
</reference>
<reference evidence="7 8" key="5">
    <citation type="journal article" date="2004" name="Genome Res.">
        <title>The status, quality, and expansion of the NIH full-length cDNA project: the Mammalian Gene Collection (MGC).</title>
        <authorList>
            <consortium name="The MGC Project Team"/>
        </authorList>
    </citation>
    <scope>NUCLEOTIDE SEQUENCE [LARGE SCALE MRNA]</scope>
    <source>
        <strain evidence="8">FVB/N</strain>
        <tissue evidence="8">Liver</tissue>
        <tissue evidence="7">Mammary tumor</tissue>
    </source>
</reference>
<reference key="6">
    <citation type="journal article" date="2010" name="Cell">
        <title>A tissue-specific atlas of mouse protein phosphorylation and expression.</title>
        <authorList>
            <person name="Huttlin E.L."/>
            <person name="Jedrychowski M.P."/>
            <person name="Elias J.E."/>
            <person name="Goswami T."/>
            <person name="Rad R."/>
            <person name="Beausoleil S.A."/>
            <person name="Villen J."/>
            <person name="Haas W."/>
            <person name="Sowa M.E."/>
            <person name="Gygi S.P."/>
        </authorList>
    </citation>
    <scope>PHOSPHORYLATION [LARGE SCALE ANALYSIS] AT SER-275</scope>
    <scope>IDENTIFICATION BY MASS SPECTROMETRY [LARGE SCALE ANALYSIS]</scope>
    <source>
        <tissue>Brain</tissue>
        <tissue>Brown adipose tissue</tissue>
        <tissue>Heart</tissue>
        <tissue>Kidney</tissue>
        <tissue>Liver</tissue>
        <tissue>Lung</tissue>
        <tissue>Pancreas</tissue>
        <tissue>Spleen</tissue>
        <tissue>Testis</tissue>
    </source>
</reference>
<reference key="7">
    <citation type="journal article" date="2013" name="Mol. Cell">
        <title>SIRT5-mediated lysine desuccinylation impacts diverse metabolic pathways.</title>
        <authorList>
            <person name="Park J."/>
            <person name="Chen Y."/>
            <person name="Tishkoff D.X."/>
            <person name="Peng C."/>
            <person name="Tan M."/>
            <person name="Dai L."/>
            <person name="Xie Z."/>
            <person name="Zhang Y."/>
            <person name="Zwaans B.M."/>
            <person name="Skinner M.E."/>
            <person name="Lombard D.B."/>
            <person name="Zhao Y."/>
        </authorList>
    </citation>
    <scope>ACETYLATION [LARGE SCALE ANALYSIS] AT LYS-61; LYS-74; LYS-79 AND LYS-290</scope>
    <scope>IDENTIFICATION BY MASS SPECTROMETRY [LARGE SCALE ANALYSIS]</scope>
    <source>
        <tissue>Embryonic fibroblast</tissue>
    </source>
</reference>
<proteinExistence type="evidence at protein level"/>
<sequence length="359" mass="40024">MPLELELCPGRWVGGKHPCFIIAEIGQNHQGDIDVAKRMIRTAKECGADCAKFQKSELEFKFNRKALERPYTSKHSWGKTYGEHKRHLEFSHDQYKELQSYAQEIGIFFTASGMDEMAVEFLHELNVPFFKVGSGDTNNFPYLEKTAKKGRPMVISSGMQSMDTMKQVYQIVKPLNPNFCFLQCTSAYPLQPEDANLRVISEYQKLFPDIPIGYSGHETGIAISVAAVALGAKVLERHITLDKTWKGSDHSASLEPGELAELVRSVRLVERALGSPTKQLLPCEMACNEKLGKSVVAKVKIPAGTTLTLDMLTVKVGEPKGYPPEDIFNLAGKKVLVTIEEDDTVMEESVESHSKKIKA</sequence>
<evidence type="ECO:0000250" key="1">
    <source>
        <dbReference type="UniProtKB" id="Q9NR45"/>
    </source>
</evidence>
<evidence type="ECO:0000255" key="2">
    <source>
        <dbReference type="PROSITE-ProRule" id="PRU00021"/>
    </source>
</evidence>
<evidence type="ECO:0000269" key="3">
    <source>
    </source>
</evidence>
<evidence type="ECO:0000303" key="4">
    <source>
    </source>
</evidence>
<evidence type="ECO:0000305" key="5"/>
<evidence type="ECO:0000305" key="6">
    <source>
    </source>
</evidence>
<evidence type="ECO:0000312" key="7">
    <source>
        <dbReference type="EMBL" id="AAH03307.1"/>
    </source>
</evidence>
<evidence type="ECO:0000312" key="8">
    <source>
        <dbReference type="EMBL" id="AAH57977.1"/>
    </source>
</evidence>
<evidence type="ECO:0000312" key="9">
    <source>
        <dbReference type="EMBL" id="BAA98131.1"/>
    </source>
</evidence>
<evidence type="ECO:0000312" key="10">
    <source>
        <dbReference type="EMBL" id="BAC36290.1"/>
    </source>
</evidence>
<evidence type="ECO:0000312" key="11">
    <source>
        <dbReference type="EMBL" id="BAE33642.1"/>
    </source>
</evidence>
<evidence type="ECO:0000312" key="12">
    <source>
        <dbReference type="EMBL" id="EDL02367.1"/>
    </source>
</evidence>
<evidence type="ECO:0000312" key="13">
    <source>
        <dbReference type="MGI" id="MGI:2149820"/>
    </source>
</evidence>
<evidence type="ECO:0000312" key="14">
    <source>
        <dbReference type="Proteomes" id="UP000000589"/>
    </source>
</evidence>
<evidence type="ECO:0007744" key="15">
    <source>
    </source>
</evidence>
<evidence type="ECO:0007744" key="16">
    <source>
    </source>
</evidence>
<feature type="chain" id="PRO_0000438681" description="N-acetylneuraminate-9-phosphate synthase" evidence="1">
    <location>
        <begin position="1"/>
        <end position="359"/>
    </location>
</feature>
<feature type="domain" description="AFP-like" evidence="2">
    <location>
        <begin position="294"/>
        <end position="353"/>
    </location>
</feature>
<feature type="modified residue" description="N6-acetyllysine" evidence="16">
    <location>
        <position position="61"/>
    </location>
</feature>
<feature type="modified residue" description="N6-acetyllysine" evidence="16">
    <location>
        <position position="74"/>
    </location>
</feature>
<feature type="modified residue" description="N6-acetyllysine" evidence="16">
    <location>
        <position position="79"/>
    </location>
</feature>
<feature type="modified residue" description="Phosphoserine" evidence="15">
    <location>
        <position position="275"/>
    </location>
</feature>
<feature type="modified residue" description="N6-acetyllysine" evidence="16">
    <location>
        <position position="290"/>
    </location>
</feature>
<feature type="sequence conflict" description="In Ref. 1; BAA98131." evidence="5" ref="1">
    <original>M</original>
    <variation>T</variation>
    <location>
        <position position="311"/>
    </location>
</feature>
<name>SIAS_MOUSE</name>